<feature type="chain" id="PRO_0000394137" description="Putative transposase InsL for insertion sequence element IS186B">
    <location>
        <begin position="1"/>
        <end position="370"/>
    </location>
</feature>
<comment type="function">
    <text>Involved in the transposition of the insertion sequence IS186.</text>
</comment>
<comment type="similarity">
    <text evidence="1">Belongs to the transposase 11 family.</text>
</comment>
<comment type="sequence caution" evidence="1">
    <conflict type="erroneous initiation">
        <sequence resource="EMBL-CDS" id="AAB40781"/>
    </conflict>
    <text>Extended N-terminus.</text>
</comment>
<accession>P0CF92</accession>
<accession>P08409</accession>
<accession>P11307</accession>
<accession>P76952</accession>
<accession>P77426</accession>
<accession>Q2MCH6</accession>
<accession>Q47051</accession>
<keyword id="KW-0233">DNA recombination</keyword>
<keyword id="KW-0238">DNA-binding</keyword>
<keyword id="KW-1185">Reference proteome</keyword>
<keyword id="KW-0814">Transposable element</keyword>
<keyword id="KW-0815">Transposition</keyword>
<name>INSL2_ECOLI</name>
<proteinExistence type="inferred from homology"/>
<organism>
    <name type="scientific">Escherichia coli (strain K12)</name>
    <dbReference type="NCBI Taxonomy" id="83333"/>
    <lineage>
        <taxon>Bacteria</taxon>
        <taxon>Pseudomonadati</taxon>
        <taxon>Pseudomonadota</taxon>
        <taxon>Gammaproteobacteria</taxon>
        <taxon>Enterobacterales</taxon>
        <taxon>Enterobacteriaceae</taxon>
        <taxon>Escherichia</taxon>
    </lineage>
</organism>
<protein>
    <recommendedName>
        <fullName>Putative transposase InsL for insertion sequence element IS186B</fullName>
    </recommendedName>
</protein>
<evidence type="ECO:0000305" key="1"/>
<sequence length="370" mass="40909">MNYSHDNWSAILAHIGKPEELDTSARNAGALTRRREIRDAATLLRLGLAYGPGGMSLREVTAWAQLHDVATLSDVALLKRLRNAADWFGILAAQTLAVRAAVTGCTSGKRLRLVDGTAISAPGGGSAEWRLHMGYDPHTCQFTDFELTDSRDAERLDRFAQTADEIRIADRGFGSRPECIRSLAFGEADYIVRVHWRGLRWLTAEGMRFDMMGFLRGLDCGKNGETTVMIGNSGNKKAGAPFPARLIAVSLPPEKALISKTRLLSENRRKGRVVQAETLEAAGHVLLLTSLPEDEYSAEQVADCYRLRWQIELAFKRLKSLLHLDALRAKEPELAKAWIFANLLAAFLIDDIIQPSLDFPPRSAGSEKKN</sequence>
<reference key="1">
    <citation type="journal article" date="1996" name="DNA Res.">
        <title>A 718-kb DNA sequence of the Escherichia coli K-12 genome corresponding to the 12.7-28.0 min region on the linkage map.</title>
        <authorList>
            <person name="Oshima T."/>
            <person name="Aiba H."/>
            <person name="Baba T."/>
            <person name="Fujita K."/>
            <person name="Hayashi K."/>
            <person name="Honjo A."/>
            <person name="Ikemoto K."/>
            <person name="Inada T."/>
            <person name="Itoh T."/>
            <person name="Kajihara M."/>
            <person name="Kanai K."/>
            <person name="Kashimoto K."/>
            <person name="Kimura S."/>
            <person name="Kitagawa M."/>
            <person name="Makino K."/>
            <person name="Masuda S."/>
            <person name="Miki T."/>
            <person name="Mizobuchi K."/>
            <person name="Mori H."/>
            <person name="Motomura K."/>
            <person name="Nakamura Y."/>
            <person name="Nashimoto H."/>
            <person name="Nishio Y."/>
            <person name="Saito N."/>
            <person name="Sampei G."/>
            <person name="Seki Y."/>
            <person name="Tagami H."/>
            <person name="Takemoto K."/>
            <person name="Wada C."/>
            <person name="Yamamoto Y."/>
            <person name="Yano M."/>
            <person name="Horiuchi T."/>
        </authorList>
    </citation>
    <scope>NUCLEOTIDE SEQUENCE [LARGE SCALE GENOMIC DNA]</scope>
    <source>
        <strain>K12 / W3110 / ATCC 27325 / DSM 5911</strain>
    </source>
</reference>
<reference key="2">
    <citation type="journal article" date="1997" name="Science">
        <title>The complete genome sequence of Escherichia coli K-12.</title>
        <authorList>
            <person name="Blattner F.R."/>
            <person name="Plunkett G. III"/>
            <person name="Bloch C.A."/>
            <person name="Perna N.T."/>
            <person name="Burland V."/>
            <person name="Riley M."/>
            <person name="Collado-Vides J."/>
            <person name="Glasner J.D."/>
            <person name="Rode C.K."/>
            <person name="Mayhew G.F."/>
            <person name="Gregor J."/>
            <person name="Davis N.W."/>
            <person name="Kirkpatrick H.A."/>
            <person name="Goeden M.A."/>
            <person name="Rose D.J."/>
            <person name="Mau B."/>
            <person name="Shao Y."/>
        </authorList>
    </citation>
    <scope>NUCLEOTIDE SEQUENCE [LARGE SCALE GENOMIC DNA]</scope>
    <source>
        <strain>K12 / MG1655 / ATCC 47076</strain>
    </source>
</reference>
<reference key="3">
    <citation type="journal article" date="2006" name="Mol. Syst. Biol.">
        <title>Highly accurate genome sequences of Escherichia coli K-12 strains MG1655 and W3110.</title>
        <authorList>
            <person name="Hayashi K."/>
            <person name="Morooka N."/>
            <person name="Yamamoto Y."/>
            <person name="Fujita K."/>
            <person name="Isono K."/>
            <person name="Choi S."/>
            <person name="Ohtsubo E."/>
            <person name="Baba T."/>
            <person name="Wanner B.L."/>
            <person name="Mori H."/>
            <person name="Horiuchi T."/>
        </authorList>
    </citation>
    <scope>NUCLEOTIDE SEQUENCE [LARGE SCALE GENOMIC DNA]</scope>
    <source>
        <strain>K12 / W3110 / ATCC 27325 / DSM 5911</strain>
    </source>
</reference>
<gene>
    <name type="primary">insL2</name>
    <name type="ordered locus">b0582</name>
    <name type="ordered locus">JW0572</name>
</gene>
<dbReference type="EMBL" id="U82598">
    <property type="protein sequence ID" value="AAB40781.1"/>
    <property type="status" value="ALT_INIT"/>
    <property type="molecule type" value="Genomic_DNA"/>
</dbReference>
<dbReference type="EMBL" id="U00096">
    <property type="protein sequence ID" value="AAC73683.1"/>
    <property type="molecule type" value="Genomic_DNA"/>
</dbReference>
<dbReference type="EMBL" id="AP009048">
    <property type="protein sequence ID" value="BAA35223.1"/>
    <property type="molecule type" value="Genomic_DNA"/>
</dbReference>
<dbReference type="PIR" id="G65013">
    <property type="entry name" value="QQEC47"/>
</dbReference>
<dbReference type="RefSeq" id="NP_415114.1">
    <property type="nucleotide sequence ID" value="NC_000913.3"/>
</dbReference>
<dbReference type="RefSeq" id="WP_001300563.1">
    <property type="nucleotide sequence ID" value="NZ_STEB01000093.1"/>
</dbReference>
<dbReference type="FunCoup" id="P0CF92">
    <property type="interactions" value="4"/>
</dbReference>
<dbReference type="EnsemblBacteria" id="AAC73683">
    <property type="protein sequence ID" value="AAC73683"/>
    <property type="gene ID" value="b0582"/>
</dbReference>
<dbReference type="GeneID" id="945200"/>
<dbReference type="KEGG" id="ecj:JW0572"/>
<dbReference type="KEGG" id="eco:b0016"/>
<dbReference type="KEGG" id="eco:b0582"/>
<dbReference type="KEGG" id="eco:b2394"/>
<dbReference type="KEGG" id="ecoc:C3026_00080"/>
<dbReference type="KEGG" id="ecoc:C3026_02900"/>
<dbReference type="KEGG" id="ecoc:C3026_13305"/>
<dbReference type="EchoBASE" id="EB4754"/>
<dbReference type="HOGENOM" id="CLU_049434_1_0_6"/>
<dbReference type="InParanoid" id="P0CF92"/>
<dbReference type="OMA" id="IVRVYWR"/>
<dbReference type="OrthoDB" id="5889367at2"/>
<dbReference type="BioCyc" id="EcoCyc:MONOMER0-4232"/>
<dbReference type="PRO" id="PR:P0CF92"/>
<dbReference type="Proteomes" id="UP000000625">
    <property type="component" value="Chromosome"/>
</dbReference>
<dbReference type="GO" id="GO:0003677">
    <property type="term" value="F:DNA binding"/>
    <property type="evidence" value="ECO:0007669"/>
    <property type="project" value="UniProtKB-KW"/>
</dbReference>
<dbReference type="GO" id="GO:0004803">
    <property type="term" value="F:transposase activity"/>
    <property type="evidence" value="ECO:0007669"/>
    <property type="project" value="InterPro"/>
</dbReference>
<dbReference type="GO" id="GO:0006313">
    <property type="term" value="P:DNA transposition"/>
    <property type="evidence" value="ECO:0007669"/>
    <property type="project" value="InterPro"/>
</dbReference>
<dbReference type="Gene3D" id="3.90.350.10">
    <property type="entry name" value="Transposase Inhibitor Protein From Tn5, Chain A, domain 1"/>
    <property type="match status" value="1"/>
</dbReference>
<dbReference type="InterPro" id="IPR012337">
    <property type="entry name" value="RNaseH-like_sf"/>
</dbReference>
<dbReference type="InterPro" id="IPR047952">
    <property type="entry name" value="Transpos_IS4"/>
</dbReference>
<dbReference type="InterPro" id="IPR002559">
    <property type="entry name" value="Transposase_11"/>
</dbReference>
<dbReference type="NCBIfam" id="NF033592">
    <property type="entry name" value="transpos_IS4_1"/>
    <property type="match status" value="1"/>
</dbReference>
<dbReference type="PANTHER" id="PTHR33258">
    <property type="entry name" value="TRANSPOSASE INSL FOR INSERTION SEQUENCE ELEMENT IS186A-RELATED"/>
    <property type="match status" value="1"/>
</dbReference>
<dbReference type="PANTHER" id="PTHR33258:SF1">
    <property type="entry name" value="TRANSPOSASE INSL FOR INSERTION SEQUENCE ELEMENT IS186A-RELATED"/>
    <property type="match status" value="1"/>
</dbReference>
<dbReference type="Pfam" id="PF01609">
    <property type="entry name" value="DDE_Tnp_1"/>
    <property type="match status" value="1"/>
</dbReference>
<dbReference type="SUPFAM" id="SSF53098">
    <property type="entry name" value="Ribonuclease H-like"/>
    <property type="match status" value="1"/>
</dbReference>